<proteinExistence type="inferred from homology"/>
<evidence type="ECO:0000255" key="1">
    <source>
        <dbReference type="HAMAP-Rule" id="MF_01217"/>
    </source>
</evidence>
<evidence type="ECO:0000255" key="2">
    <source>
        <dbReference type="PROSITE-ProRule" id="PRU00258"/>
    </source>
</evidence>
<dbReference type="EMBL" id="AP008957">
    <property type="protein sequence ID" value="BAH34381.1"/>
    <property type="molecule type" value="Genomic_DNA"/>
</dbReference>
<dbReference type="SMR" id="C1A196"/>
<dbReference type="KEGG" id="rer:RER_36730"/>
<dbReference type="eggNOG" id="COG0236">
    <property type="taxonomic scope" value="Bacteria"/>
</dbReference>
<dbReference type="HOGENOM" id="CLU_108696_5_6_11"/>
<dbReference type="UniPathway" id="UPA00094"/>
<dbReference type="Proteomes" id="UP000002204">
    <property type="component" value="Chromosome"/>
</dbReference>
<dbReference type="GO" id="GO:0005829">
    <property type="term" value="C:cytosol"/>
    <property type="evidence" value="ECO:0007669"/>
    <property type="project" value="TreeGrafter"/>
</dbReference>
<dbReference type="GO" id="GO:0016020">
    <property type="term" value="C:membrane"/>
    <property type="evidence" value="ECO:0007669"/>
    <property type="project" value="GOC"/>
</dbReference>
<dbReference type="GO" id="GO:0000035">
    <property type="term" value="F:acyl binding"/>
    <property type="evidence" value="ECO:0007669"/>
    <property type="project" value="TreeGrafter"/>
</dbReference>
<dbReference type="GO" id="GO:0000036">
    <property type="term" value="F:acyl carrier activity"/>
    <property type="evidence" value="ECO:0007669"/>
    <property type="project" value="UniProtKB-UniRule"/>
</dbReference>
<dbReference type="GO" id="GO:0009245">
    <property type="term" value="P:lipid A biosynthetic process"/>
    <property type="evidence" value="ECO:0007669"/>
    <property type="project" value="TreeGrafter"/>
</dbReference>
<dbReference type="FunFam" id="1.10.1200.10:FF:000010">
    <property type="entry name" value="Acyl carrier protein"/>
    <property type="match status" value="1"/>
</dbReference>
<dbReference type="Gene3D" id="1.10.1200.10">
    <property type="entry name" value="ACP-like"/>
    <property type="match status" value="1"/>
</dbReference>
<dbReference type="HAMAP" id="MF_01217">
    <property type="entry name" value="Acyl_carrier"/>
    <property type="match status" value="1"/>
</dbReference>
<dbReference type="InterPro" id="IPR003231">
    <property type="entry name" value="ACP"/>
</dbReference>
<dbReference type="InterPro" id="IPR036736">
    <property type="entry name" value="ACP-like_sf"/>
</dbReference>
<dbReference type="InterPro" id="IPR053393">
    <property type="entry name" value="Meromycolate-ACP"/>
</dbReference>
<dbReference type="InterPro" id="IPR009081">
    <property type="entry name" value="PP-bd_ACP"/>
</dbReference>
<dbReference type="NCBIfam" id="NF040636">
    <property type="entry name" value="AcpM"/>
    <property type="match status" value="1"/>
</dbReference>
<dbReference type="NCBIfam" id="NF002147">
    <property type="entry name" value="PRK00982.1-1"/>
    <property type="match status" value="1"/>
</dbReference>
<dbReference type="NCBIfam" id="NF002148">
    <property type="entry name" value="PRK00982.1-2"/>
    <property type="match status" value="1"/>
</dbReference>
<dbReference type="NCBIfam" id="NF002150">
    <property type="entry name" value="PRK00982.1-4"/>
    <property type="match status" value="1"/>
</dbReference>
<dbReference type="PANTHER" id="PTHR20863">
    <property type="entry name" value="ACYL CARRIER PROTEIN"/>
    <property type="match status" value="1"/>
</dbReference>
<dbReference type="PANTHER" id="PTHR20863:SF76">
    <property type="entry name" value="CARRIER DOMAIN-CONTAINING PROTEIN"/>
    <property type="match status" value="1"/>
</dbReference>
<dbReference type="Pfam" id="PF00550">
    <property type="entry name" value="PP-binding"/>
    <property type="match status" value="1"/>
</dbReference>
<dbReference type="SUPFAM" id="SSF47336">
    <property type="entry name" value="ACP-like"/>
    <property type="match status" value="1"/>
</dbReference>
<dbReference type="PROSITE" id="PS50075">
    <property type="entry name" value="CARRIER"/>
    <property type="match status" value="1"/>
</dbReference>
<gene>
    <name evidence="1" type="primary">acpP</name>
    <name type="ordered locus">RER_36730</name>
</gene>
<accession>C1A196</accession>
<comment type="function">
    <text evidence="1">Carrier of the growing fatty acid chain in fatty acid biosynthesis.</text>
</comment>
<comment type="pathway">
    <text evidence="1">Lipid metabolism; fatty acid biosynthesis.</text>
</comment>
<comment type="subcellular location">
    <subcellularLocation>
        <location evidence="1">Cytoplasm</location>
    </subcellularLocation>
</comment>
<comment type="PTM">
    <text evidence="1">4'-phosphopantetheine is transferred from CoA to a specific serine of apo-ACP by AcpS. This modification is essential for activity because fatty acids are bound in thioester linkage to the sulfhydryl of the prosthetic group.</text>
</comment>
<comment type="similarity">
    <text evidence="1">Belongs to the acyl carrier protein (ACP) family.</text>
</comment>
<organism>
    <name type="scientific">Rhodococcus erythropolis (strain PR4 / NBRC 100887)</name>
    <dbReference type="NCBI Taxonomy" id="234621"/>
    <lineage>
        <taxon>Bacteria</taxon>
        <taxon>Bacillati</taxon>
        <taxon>Actinomycetota</taxon>
        <taxon>Actinomycetes</taxon>
        <taxon>Mycobacteriales</taxon>
        <taxon>Nocardiaceae</taxon>
        <taxon>Rhodococcus</taxon>
        <taxon>Rhodococcus erythropolis group</taxon>
    </lineage>
</organism>
<feature type="chain" id="PRO_1000213916" description="Acyl carrier protein">
    <location>
        <begin position="1"/>
        <end position="91"/>
    </location>
</feature>
<feature type="domain" description="Carrier" evidence="2">
    <location>
        <begin position="6"/>
        <end position="81"/>
    </location>
</feature>
<feature type="modified residue" description="O-(pantetheine 4'-phosphoryl)serine" evidence="2">
    <location>
        <position position="41"/>
    </location>
</feature>
<keyword id="KW-0963">Cytoplasm</keyword>
<keyword id="KW-0275">Fatty acid biosynthesis</keyword>
<keyword id="KW-0276">Fatty acid metabolism</keyword>
<keyword id="KW-0444">Lipid biosynthesis</keyword>
<keyword id="KW-0443">Lipid metabolism</keyword>
<keyword id="KW-0596">Phosphopantetheine</keyword>
<keyword id="KW-0597">Phosphoprotein</keyword>
<name>ACP_RHOE4</name>
<reference key="1">
    <citation type="submission" date="2005-03" db="EMBL/GenBank/DDBJ databases">
        <title>Comparison of the complete genome sequences of Rhodococcus erythropolis PR4 and Rhodococcus opacus B4.</title>
        <authorList>
            <person name="Takarada H."/>
            <person name="Sekine M."/>
            <person name="Hosoyama A."/>
            <person name="Yamada R."/>
            <person name="Fujisawa T."/>
            <person name="Omata S."/>
            <person name="Shimizu A."/>
            <person name="Tsukatani N."/>
            <person name="Tanikawa S."/>
            <person name="Fujita N."/>
            <person name="Harayama S."/>
        </authorList>
    </citation>
    <scope>NUCLEOTIDE SEQUENCE [LARGE SCALE GENOMIC DNA]</scope>
    <source>
        <strain>PR4 / NBRC 100887</strain>
    </source>
</reference>
<protein>
    <recommendedName>
        <fullName evidence="1">Acyl carrier protein</fullName>
        <shortName evidence="1">ACP</shortName>
    </recommendedName>
</protein>
<sequence>MAHTQEEIIAELGQIVEEVTGIEPSEVTVDKSFVDDLDIDSLSMVEIAVQTEDKYGVKVPDEDLAGLRTVGDIVAYIQKLEAEGAEAKNAE</sequence>